<name>ISPF_EHRRW</name>
<gene>
    <name evidence="1" type="primary">ispF</name>
    <name type="ordered locus">Erum1020</name>
    <name type="ordered locus">ERWE_CDS_00990</name>
</gene>
<reference key="1">
    <citation type="journal article" date="2005" name="Proc. Natl. Acad. Sci. U.S.A.">
        <title>The genome of the heartwater agent Ehrlichia ruminantium contains multiple tandem repeats of actively variable copy number.</title>
        <authorList>
            <person name="Collins N.E."/>
            <person name="Liebenberg J."/>
            <person name="de Villiers E.P."/>
            <person name="Brayton K.A."/>
            <person name="Louw E."/>
            <person name="Pretorius A."/>
            <person name="Faber F.E."/>
            <person name="van Heerden H."/>
            <person name="Josemans A."/>
            <person name="van Kleef M."/>
            <person name="Steyn H.C."/>
            <person name="van Strijp M.F."/>
            <person name="Zweygarth E."/>
            <person name="Jongejan F."/>
            <person name="Maillard J.C."/>
            <person name="Berthier D."/>
            <person name="Botha M."/>
            <person name="Joubert F."/>
            <person name="Corton C.H."/>
            <person name="Thomson N.R."/>
            <person name="Allsopp M.T."/>
            <person name="Allsopp B.A."/>
        </authorList>
    </citation>
    <scope>NUCLEOTIDE SEQUENCE [LARGE SCALE GENOMIC DNA]</scope>
    <source>
        <strain>Welgevonden</strain>
    </source>
</reference>
<reference key="2">
    <citation type="journal article" date="2006" name="J. Bacteriol.">
        <title>Comparative genomic analysis of three strains of Ehrlichia ruminantium reveals an active process of genome size plasticity.</title>
        <authorList>
            <person name="Frutos R."/>
            <person name="Viari A."/>
            <person name="Ferraz C."/>
            <person name="Morgat A."/>
            <person name="Eychenie S."/>
            <person name="Kandassamy Y."/>
            <person name="Chantal I."/>
            <person name="Bensaid A."/>
            <person name="Coissac E."/>
            <person name="Vachiery N."/>
            <person name="Demaille J."/>
            <person name="Martinez D."/>
        </authorList>
    </citation>
    <scope>NUCLEOTIDE SEQUENCE [LARGE SCALE GENOMIC DNA]</scope>
    <source>
        <strain>Welgevonden</strain>
    </source>
</reference>
<feature type="chain" id="PRO_0000237725" description="2-C-methyl-D-erythritol 2,4-cyclodiphosphate synthase">
    <location>
        <begin position="1"/>
        <end position="173"/>
    </location>
</feature>
<feature type="binding site" evidence="1">
    <location>
        <begin position="17"/>
        <end position="19"/>
    </location>
    <ligand>
        <name>4-CDP-2-C-methyl-D-erythritol 2-phosphate</name>
        <dbReference type="ChEBI" id="CHEBI:57919"/>
    </ligand>
</feature>
<feature type="binding site" evidence="1">
    <location>
        <position position="17"/>
    </location>
    <ligand>
        <name>a divalent metal cation</name>
        <dbReference type="ChEBI" id="CHEBI:60240"/>
    </ligand>
</feature>
<feature type="binding site" evidence="1">
    <location>
        <position position="19"/>
    </location>
    <ligand>
        <name>a divalent metal cation</name>
        <dbReference type="ChEBI" id="CHEBI:60240"/>
    </ligand>
</feature>
<feature type="binding site" evidence="1">
    <location>
        <begin position="49"/>
        <end position="50"/>
    </location>
    <ligand>
        <name>4-CDP-2-C-methyl-D-erythritol 2-phosphate</name>
        <dbReference type="ChEBI" id="CHEBI:57919"/>
    </ligand>
</feature>
<feature type="binding site" evidence="1">
    <location>
        <position position="57"/>
    </location>
    <ligand>
        <name>a divalent metal cation</name>
        <dbReference type="ChEBI" id="CHEBI:60240"/>
    </ligand>
</feature>
<feature type="binding site" evidence="1">
    <location>
        <begin position="76"/>
        <end position="80"/>
    </location>
    <ligand>
        <name>4-CDP-2-C-methyl-D-erythritol 2-phosphate</name>
        <dbReference type="ChEBI" id="CHEBI:57919"/>
    </ligand>
</feature>
<feature type="binding site" evidence="1">
    <location>
        <begin position="147"/>
        <end position="150"/>
    </location>
    <ligand>
        <name>4-CDP-2-C-methyl-D-erythritol 2-phosphate</name>
        <dbReference type="ChEBI" id="CHEBI:57919"/>
    </ligand>
</feature>
<feature type="binding site" evidence="1">
    <location>
        <position position="157"/>
    </location>
    <ligand>
        <name>4-CDP-2-C-methyl-D-erythritol 2-phosphate</name>
        <dbReference type="ChEBI" id="CHEBI:57919"/>
    </ligand>
</feature>
<feature type="site" description="Transition state stabilizer" evidence="1">
    <location>
        <position position="49"/>
    </location>
</feature>
<feature type="site" description="Transition state stabilizer" evidence="1">
    <location>
        <position position="148"/>
    </location>
</feature>
<dbReference type="EC" id="4.6.1.12" evidence="1"/>
<dbReference type="EMBL" id="CR767821">
    <property type="protein sequence ID" value="CAH57817.1"/>
    <property type="molecule type" value="Genomic_DNA"/>
</dbReference>
<dbReference type="EMBL" id="CR925678">
    <property type="protein sequence ID" value="CAI26593.1"/>
    <property type="status" value="ALT_INIT"/>
    <property type="molecule type" value="Genomic_DNA"/>
</dbReference>
<dbReference type="RefSeq" id="WP_011154786.1">
    <property type="nucleotide sequence ID" value="NC_005295.2"/>
</dbReference>
<dbReference type="SMR" id="Q5HC74"/>
<dbReference type="GeneID" id="33058153"/>
<dbReference type="KEGG" id="eru:Erum1020"/>
<dbReference type="KEGG" id="erw:ERWE_CDS_00990"/>
<dbReference type="eggNOG" id="COG0245">
    <property type="taxonomic scope" value="Bacteria"/>
</dbReference>
<dbReference type="HOGENOM" id="CLU_084630_2_0_5"/>
<dbReference type="UniPathway" id="UPA00056">
    <property type="reaction ID" value="UER00095"/>
</dbReference>
<dbReference type="Proteomes" id="UP000001021">
    <property type="component" value="Chromosome"/>
</dbReference>
<dbReference type="GO" id="GO:0008685">
    <property type="term" value="F:2-C-methyl-D-erythritol 2,4-cyclodiphosphate synthase activity"/>
    <property type="evidence" value="ECO:0007669"/>
    <property type="project" value="UniProtKB-UniRule"/>
</dbReference>
<dbReference type="GO" id="GO:0046872">
    <property type="term" value="F:metal ion binding"/>
    <property type="evidence" value="ECO:0007669"/>
    <property type="project" value="UniProtKB-KW"/>
</dbReference>
<dbReference type="GO" id="GO:0019288">
    <property type="term" value="P:isopentenyl diphosphate biosynthetic process, methylerythritol 4-phosphate pathway"/>
    <property type="evidence" value="ECO:0007669"/>
    <property type="project" value="UniProtKB-UniRule"/>
</dbReference>
<dbReference type="GO" id="GO:0016114">
    <property type="term" value="P:terpenoid biosynthetic process"/>
    <property type="evidence" value="ECO:0007669"/>
    <property type="project" value="InterPro"/>
</dbReference>
<dbReference type="CDD" id="cd00554">
    <property type="entry name" value="MECDP_synthase"/>
    <property type="match status" value="1"/>
</dbReference>
<dbReference type="Gene3D" id="3.30.1330.50">
    <property type="entry name" value="2-C-methyl-D-erythritol 2,4-cyclodiphosphate synthase"/>
    <property type="match status" value="1"/>
</dbReference>
<dbReference type="HAMAP" id="MF_00107">
    <property type="entry name" value="IspF"/>
    <property type="match status" value="1"/>
</dbReference>
<dbReference type="InterPro" id="IPR003526">
    <property type="entry name" value="MECDP_synthase"/>
</dbReference>
<dbReference type="InterPro" id="IPR020555">
    <property type="entry name" value="MECDP_synthase_CS"/>
</dbReference>
<dbReference type="InterPro" id="IPR036571">
    <property type="entry name" value="MECDP_synthase_sf"/>
</dbReference>
<dbReference type="NCBIfam" id="TIGR00151">
    <property type="entry name" value="ispF"/>
    <property type="match status" value="1"/>
</dbReference>
<dbReference type="PANTHER" id="PTHR43181">
    <property type="entry name" value="2-C-METHYL-D-ERYTHRITOL 2,4-CYCLODIPHOSPHATE SYNTHASE, CHLOROPLASTIC"/>
    <property type="match status" value="1"/>
</dbReference>
<dbReference type="PANTHER" id="PTHR43181:SF1">
    <property type="entry name" value="2-C-METHYL-D-ERYTHRITOL 2,4-CYCLODIPHOSPHATE SYNTHASE, CHLOROPLASTIC"/>
    <property type="match status" value="1"/>
</dbReference>
<dbReference type="Pfam" id="PF02542">
    <property type="entry name" value="YgbB"/>
    <property type="match status" value="1"/>
</dbReference>
<dbReference type="SUPFAM" id="SSF69765">
    <property type="entry name" value="IpsF-like"/>
    <property type="match status" value="1"/>
</dbReference>
<dbReference type="PROSITE" id="PS01350">
    <property type="entry name" value="ISPF"/>
    <property type="match status" value="1"/>
</dbReference>
<proteinExistence type="inferred from homology"/>
<sequence>MSKHTNIPMFRIGIGYDVHRFDNINNDDSNTSITICGIKINYHKKIIAHSDGDVGLHALADAILGAVGCGSIGQHFPNTDKKWKNAESSHFVIEAQKKAQERGYIISNADIIIICEQPKIMPYALEMQHYIAQFTSIDPSFINIKATTTEKLGAIGRNEGIAAQAIVLCSQQY</sequence>
<evidence type="ECO:0000255" key="1">
    <source>
        <dbReference type="HAMAP-Rule" id="MF_00107"/>
    </source>
</evidence>
<evidence type="ECO:0000305" key="2"/>
<organism>
    <name type="scientific">Ehrlichia ruminantium (strain Welgevonden)</name>
    <dbReference type="NCBI Taxonomy" id="254945"/>
    <lineage>
        <taxon>Bacteria</taxon>
        <taxon>Pseudomonadati</taxon>
        <taxon>Pseudomonadota</taxon>
        <taxon>Alphaproteobacteria</taxon>
        <taxon>Rickettsiales</taxon>
        <taxon>Anaplasmataceae</taxon>
        <taxon>Ehrlichia</taxon>
    </lineage>
</organism>
<protein>
    <recommendedName>
        <fullName evidence="1">2-C-methyl-D-erythritol 2,4-cyclodiphosphate synthase</fullName>
        <shortName evidence="1">MECDP-synthase</shortName>
        <shortName evidence="1">MECPP-synthase</shortName>
        <shortName evidence="1">MECPS</shortName>
        <ecNumber evidence="1">4.6.1.12</ecNumber>
    </recommendedName>
</protein>
<accession>Q5HC74</accession>
<accession>Q5FCQ1</accession>
<comment type="function">
    <text evidence="1">Involved in the biosynthesis of isopentenyl diphosphate (IPP) and dimethylallyl diphosphate (DMAPP), two major building blocks of isoprenoid compounds. Catalyzes the conversion of 4-diphosphocytidyl-2-C-methyl-D-erythritol 2-phosphate (CDP-ME2P) to 2-C-methyl-D-erythritol 2,4-cyclodiphosphate (ME-CPP) with a corresponding release of cytidine 5-monophosphate (CMP).</text>
</comment>
<comment type="catalytic activity">
    <reaction evidence="1">
        <text>4-CDP-2-C-methyl-D-erythritol 2-phosphate = 2-C-methyl-D-erythritol 2,4-cyclic diphosphate + CMP</text>
        <dbReference type="Rhea" id="RHEA:23864"/>
        <dbReference type="ChEBI" id="CHEBI:57919"/>
        <dbReference type="ChEBI" id="CHEBI:58483"/>
        <dbReference type="ChEBI" id="CHEBI:60377"/>
        <dbReference type="EC" id="4.6.1.12"/>
    </reaction>
</comment>
<comment type="cofactor">
    <cofactor evidence="1">
        <name>a divalent metal cation</name>
        <dbReference type="ChEBI" id="CHEBI:60240"/>
    </cofactor>
    <text evidence="1">Binds 1 divalent metal cation per subunit.</text>
</comment>
<comment type="pathway">
    <text evidence="1">Isoprenoid biosynthesis; isopentenyl diphosphate biosynthesis via DXP pathway; isopentenyl diphosphate from 1-deoxy-D-xylulose 5-phosphate: step 4/6.</text>
</comment>
<comment type="subunit">
    <text evidence="1">Homotrimer.</text>
</comment>
<comment type="similarity">
    <text evidence="1">Belongs to the IspF family.</text>
</comment>
<comment type="sequence caution" evidence="2">
    <conflict type="erroneous initiation">
        <sequence resource="EMBL-CDS" id="CAI26593"/>
    </conflict>
    <text>Extended N-terminus.</text>
</comment>
<keyword id="KW-0414">Isoprene biosynthesis</keyword>
<keyword id="KW-0456">Lyase</keyword>
<keyword id="KW-0479">Metal-binding</keyword>